<protein>
    <recommendedName>
        <fullName evidence="3">Apolipophorin 2</fullName>
    </recommendedName>
    <alternativeName>
        <fullName evidence="3">Apolipophorin-II</fullName>
        <shortName evidence="3">apoLp-II</shortName>
    </alternativeName>
</protein>
<keyword id="KW-0903">Direct protein sequencing</keyword>
<keyword id="KW-0445">Lipid transport</keyword>
<keyword id="KW-0446">Lipid-binding</keyword>
<keyword id="KW-1185">Reference proteome</keyword>
<keyword id="KW-0964">Secreted</keyword>
<keyword id="KW-0813">Transport</keyword>
<proteinExistence type="evidence at protein level"/>
<name>APLP2_GALME</name>
<evidence type="ECO:0000250" key="1">
    <source>
        <dbReference type="UniProtKB" id="Q9V496"/>
    </source>
</evidence>
<evidence type="ECO:0000269" key="2">
    <source>
    </source>
</evidence>
<evidence type="ECO:0000303" key="3">
    <source>
    </source>
</evidence>
<evidence type="ECO:0000305" key="4"/>
<accession>C0HKF4</accession>
<organism evidence="3">
    <name type="scientific">Galleria mellonella</name>
    <name type="common">Greater wax moth</name>
    <dbReference type="NCBI Taxonomy" id="7137"/>
    <lineage>
        <taxon>Eukaryota</taxon>
        <taxon>Metazoa</taxon>
        <taxon>Ecdysozoa</taxon>
        <taxon>Arthropoda</taxon>
        <taxon>Hexapoda</taxon>
        <taxon>Insecta</taxon>
        <taxon>Pterygota</taxon>
        <taxon>Neoptera</taxon>
        <taxon>Endopterygota</taxon>
        <taxon>Lepidoptera</taxon>
        <taxon>Glossata</taxon>
        <taxon>Ditrysia</taxon>
        <taxon>Pyraloidea</taxon>
        <taxon>Pyralidae</taxon>
        <taxon>Galleriinae</taxon>
        <taxon>Galleria</taxon>
    </lineage>
</organism>
<comment type="function">
    <text evidence="1">Constitutes the major component of lipophorin, which mediates transport for various types of lipids in hemolymph. Acts by forming lipoprotein particles that bind lipoproteins and lipids (By similarity).</text>
</comment>
<comment type="subcellular location">
    <subcellularLocation>
        <location evidence="2">Secreted</location>
    </subcellularLocation>
    <text evidence="2">Secreted into hemolymph.</text>
</comment>
<comment type="tissue specificity">
    <text evidence="2">Expressed in hemolymph.</text>
</comment>
<feature type="chain" id="PRO_0000443525" description="Apolipophorin 2" evidence="2">
    <location>
        <begin position="1"/>
        <end position="21" status="greater than"/>
    </location>
</feature>
<feature type="non-terminal residue" evidence="3">
    <location>
        <position position="21"/>
    </location>
</feature>
<dbReference type="InParanoid" id="C0HKF4"/>
<dbReference type="Proteomes" id="UP000504614">
    <property type="component" value="Unplaced"/>
</dbReference>
<dbReference type="GO" id="GO:0005615">
    <property type="term" value="C:extracellular space"/>
    <property type="evidence" value="ECO:0000314"/>
    <property type="project" value="UniProtKB"/>
</dbReference>
<dbReference type="GO" id="GO:0008289">
    <property type="term" value="F:lipid binding"/>
    <property type="evidence" value="ECO:0007669"/>
    <property type="project" value="UniProtKB-KW"/>
</dbReference>
<dbReference type="GO" id="GO:0006869">
    <property type="term" value="P:lipid transport"/>
    <property type="evidence" value="ECO:0007669"/>
    <property type="project" value="UniProtKB-KW"/>
</dbReference>
<reference evidence="4" key="1">
    <citation type="journal article" date="2017" name="J. Insect Physiol.">
        <title>Studies on localization and protein ligands of Galleria mellonella apolipophorin III during immune response against different pathogens.</title>
        <authorList>
            <person name="Staczek S."/>
            <person name="Zdybicka-Barabas A."/>
            <person name="Mak P."/>
            <person name="Sowa-Jasilek A."/>
            <person name="Kedracka-Krok S."/>
            <person name="Jankowska U."/>
            <person name="Suder P."/>
            <person name="Wydrych J."/>
            <person name="Grygorczuk K."/>
            <person name="Jakubowicz T."/>
            <person name="Cytrynska M."/>
        </authorList>
    </citation>
    <scope>PROTEIN SEQUENCE</scope>
    <scope>SUBCELLULAR LOCATION</scope>
    <scope>TISSUE SPECIFICITY</scope>
    <source>
        <tissue evidence="3">Hemolymph</tissue>
    </source>
</reference>
<sequence length="21" mass="2122">DDKCSIGCKGSATAPTFLNGH</sequence>